<sequence>MGQKVNPVGLRVGVIRDWESKWYAEKDYADLLHEDIKIREYIENRLKDASVSKIEIERAANRVNITISTAKPGMVIGKGGSEVEALRKALNELTGKRVHINIFEVKQADLDAKLVAENIARQLENRISFRRAMKQAIQRTMRAGAQGIKTQVSGRLGGADIARAEHYSEGTVPLHTLRADIDYGTAEADTTYGKLGVKIWIYRGEVLPTKGKNKKEGGN</sequence>
<accession>Q9Z9K8</accession>
<accession>Q9JPY0</accession>
<comment type="function">
    <text evidence="1">Binds the lower part of the 30S subunit head. Binds mRNA in the 70S ribosome, positioning it for translation.</text>
</comment>
<comment type="subunit">
    <text evidence="1">Part of the 30S ribosomal subunit. Forms a tight complex with proteins S10 and S14.</text>
</comment>
<comment type="similarity">
    <text evidence="1">Belongs to the universal ribosomal protein uS3 family.</text>
</comment>
<reference key="1">
    <citation type="journal article" date="1999" name="Biosci. Biotechnol. Biochem.">
        <title>Sequence analysis of a 32-kb region including the major ribosomal protein gene clusters from alkaliphilic Bacillus sp. strain C-125.</title>
        <authorList>
            <person name="Takami H."/>
            <person name="Takaki Y."/>
            <person name="Nakasone K."/>
            <person name="Hirama C."/>
            <person name="Inoue A."/>
            <person name="Horikoshi K."/>
        </authorList>
    </citation>
    <scope>NUCLEOTIDE SEQUENCE [GENOMIC DNA]</scope>
    <source>
        <strain>ATCC BAA-125 / DSM 18197 / FERM 7344 / JCM 9153 / C-125</strain>
    </source>
</reference>
<reference key="2">
    <citation type="journal article" date="2000" name="Nucleic Acids Res.">
        <title>Complete genome sequence of the alkaliphilic bacterium Bacillus halodurans and genomic sequence comparison with Bacillus subtilis.</title>
        <authorList>
            <person name="Takami H."/>
            <person name="Nakasone K."/>
            <person name="Takaki Y."/>
            <person name="Maeno G."/>
            <person name="Sasaki R."/>
            <person name="Masui N."/>
            <person name="Fuji F."/>
            <person name="Hirama C."/>
            <person name="Nakamura Y."/>
            <person name="Ogasawara N."/>
            <person name="Kuhara S."/>
            <person name="Horikoshi K."/>
        </authorList>
    </citation>
    <scope>NUCLEOTIDE SEQUENCE [LARGE SCALE GENOMIC DNA]</scope>
    <source>
        <strain>ATCC BAA-125 / DSM 18197 / FERM 7344 / JCM 9153 / C-125</strain>
    </source>
</reference>
<feature type="chain" id="PRO_0000130069" description="Small ribosomal subunit protein uS3">
    <location>
        <begin position="1"/>
        <end position="219"/>
    </location>
</feature>
<feature type="domain" description="KH type-2" evidence="1">
    <location>
        <begin position="38"/>
        <end position="106"/>
    </location>
</feature>
<proteinExistence type="inferred from homology"/>
<gene>
    <name evidence="1" type="primary">rpsC</name>
    <name type="ordered locus">BH0140</name>
</gene>
<dbReference type="EMBL" id="AB017508">
    <property type="protein sequence ID" value="BAA75277.1"/>
    <property type="molecule type" value="Genomic_DNA"/>
</dbReference>
<dbReference type="EMBL" id="BA000004">
    <property type="protein sequence ID" value="BAB03859.1"/>
    <property type="molecule type" value="Genomic_DNA"/>
</dbReference>
<dbReference type="PIR" id="T44389">
    <property type="entry name" value="T44389"/>
</dbReference>
<dbReference type="RefSeq" id="WP_010896323.1">
    <property type="nucleotide sequence ID" value="NC_002570.2"/>
</dbReference>
<dbReference type="SMR" id="Q9Z9K8"/>
<dbReference type="STRING" id="272558.gene:10725980"/>
<dbReference type="GeneID" id="87595681"/>
<dbReference type="KEGG" id="bha:BH0140"/>
<dbReference type="eggNOG" id="COG0092">
    <property type="taxonomic scope" value="Bacteria"/>
</dbReference>
<dbReference type="HOGENOM" id="CLU_058591_0_2_9"/>
<dbReference type="OrthoDB" id="9806396at2"/>
<dbReference type="Proteomes" id="UP000001258">
    <property type="component" value="Chromosome"/>
</dbReference>
<dbReference type="GO" id="GO:0022627">
    <property type="term" value="C:cytosolic small ribosomal subunit"/>
    <property type="evidence" value="ECO:0007669"/>
    <property type="project" value="TreeGrafter"/>
</dbReference>
<dbReference type="GO" id="GO:0003729">
    <property type="term" value="F:mRNA binding"/>
    <property type="evidence" value="ECO:0007669"/>
    <property type="project" value="UniProtKB-UniRule"/>
</dbReference>
<dbReference type="GO" id="GO:0019843">
    <property type="term" value="F:rRNA binding"/>
    <property type="evidence" value="ECO:0007669"/>
    <property type="project" value="UniProtKB-UniRule"/>
</dbReference>
<dbReference type="GO" id="GO:0003735">
    <property type="term" value="F:structural constituent of ribosome"/>
    <property type="evidence" value="ECO:0007669"/>
    <property type="project" value="InterPro"/>
</dbReference>
<dbReference type="GO" id="GO:0006412">
    <property type="term" value="P:translation"/>
    <property type="evidence" value="ECO:0007669"/>
    <property type="project" value="UniProtKB-UniRule"/>
</dbReference>
<dbReference type="CDD" id="cd02412">
    <property type="entry name" value="KH-II_30S_S3"/>
    <property type="match status" value="1"/>
</dbReference>
<dbReference type="FunFam" id="3.30.1140.32:FF:000001">
    <property type="entry name" value="30S ribosomal protein S3"/>
    <property type="match status" value="1"/>
</dbReference>
<dbReference type="FunFam" id="3.30.300.20:FF:000001">
    <property type="entry name" value="30S ribosomal protein S3"/>
    <property type="match status" value="1"/>
</dbReference>
<dbReference type="Gene3D" id="3.30.300.20">
    <property type="match status" value="1"/>
</dbReference>
<dbReference type="Gene3D" id="3.30.1140.32">
    <property type="entry name" value="Ribosomal protein S3, C-terminal domain"/>
    <property type="match status" value="1"/>
</dbReference>
<dbReference type="HAMAP" id="MF_01309_B">
    <property type="entry name" value="Ribosomal_uS3_B"/>
    <property type="match status" value="1"/>
</dbReference>
<dbReference type="InterPro" id="IPR004087">
    <property type="entry name" value="KH_dom"/>
</dbReference>
<dbReference type="InterPro" id="IPR015946">
    <property type="entry name" value="KH_dom-like_a/b"/>
</dbReference>
<dbReference type="InterPro" id="IPR004044">
    <property type="entry name" value="KH_dom_type_2"/>
</dbReference>
<dbReference type="InterPro" id="IPR009019">
    <property type="entry name" value="KH_sf_prok-type"/>
</dbReference>
<dbReference type="InterPro" id="IPR036419">
    <property type="entry name" value="Ribosomal_S3_C_sf"/>
</dbReference>
<dbReference type="InterPro" id="IPR005704">
    <property type="entry name" value="Ribosomal_uS3_bac-typ"/>
</dbReference>
<dbReference type="InterPro" id="IPR001351">
    <property type="entry name" value="Ribosomal_uS3_C"/>
</dbReference>
<dbReference type="InterPro" id="IPR018280">
    <property type="entry name" value="Ribosomal_uS3_CS"/>
</dbReference>
<dbReference type="NCBIfam" id="TIGR01009">
    <property type="entry name" value="rpsC_bact"/>
    <property type="match status" value="1"/>
</dbReference>
<dbReference type="PANTHER" id="PTHR11760">
    <property type="entry name" value="30S/40S RIBOSOMAL PROTEIN S3"/>
    <property type="match status" value="1"/>
</dbReference>
<dbReference type="PANTHER" id="PTHR11760:SF19">
    <property type="entry name" value="SMALL RIBOSOMAL SUBUNIT PROTEIN US3C"/>
    <property type="match status" value="1"/>
</dbReference>
<dbReference type="Pfam" id="PF07650">
    <property type="entry name" value="KH_2"/>
    <property type="match status" value="1"/>
</dbReference>
<dbReference type="Pfam" id="PF00189">
    <property type="entry name" value="Ribosomal_S3_C"/>
    <property type="match status" value="1"/>
</dbReference>
<dbReference type="SMART" id="SM00322">
    <property type="entry name" value="KH"/>
    <property type="match status" value="1"/>
</dbReference>
<dbReference type="SUPFAM" id="SSF54814">
    <property type="entry name" value="Prokaryotic type KH domain (KH-domain type II)"/>
    <property type="match status" value="1"/>
</dbReference>
<dbReference type="SUPFAM" id="SSF54821">
    <property type="entry name" value="Ribosomal protein S3 C-terminal domain"/>
    <property type="match status" value="1"/>
</dbReference>
<dbReference type="PROSITE" id="PS50823">
    <property type="entry name" value="KH_TYPE_2"/>
    <property type="match status" value="1"/>
</dbReference>
<dbReference type="PROSITE" id="PS00548">
    <property type="entry name" value="RIBOSOMAL_S3"/>
    <property type="match status" value="1"/>
</dbReference>
<evidence type="ECO:0000255" key="1">
    <source>
        <dbReference type="HAMAP-Rule" id="MF_01309"/>
    </source>
</evidence>
<evidence type="ECO:0000305" key="2"/>
<organism>
    <name type="scientific">Halalkalibacterium halodurans (strain ATCC BAA-125 / DSM 18197 / FERM 7344 / JCM 9153 / C-125)</name>
    <name type="common">Bacillus halodurans</name>
    <dbReference type="NCBI Taxonomy" id="272558"/>
    <lineage>
        <taxon>Bacteria</taxon>
        <taxon>Bacillati</taxon>
        <taxon>Bacillota</taxon>
        <taxon>Bacilli</taxon>
        <taxon>Bacillales</taxon>
        <taxon>Bacillaceae</taxon>
        <taxon>Halalkalibacterium (ex Joshi et al. 2022)</taxon>
    </lineage>
</organism>
<protein>
    <recommendedName>
        <fullName evidence="1">Small ribosomal subunit protein uS3</fullName>
    </recommendedName>
    <alternativeName>
        <fullName evidence="2">30S ribosomal protein S3</fullName>
    </alternativeName>
</protein>
<name>RS3_HALH5</name>
<keyword id="KW-1185">Reference proteome</keyword>
<keyword id="KW-0687">Ribonucleoprotein</keyword>
<keyword id="KW-0689">Ribosomal protein</keyword>
<keyword id="KW-0694">RNA-binding</keyword>
<keyword id="KW-0699">rRNA-binding</keyword>